<sequence length="370" mass="41635">MNNSIITDDEVREFYLNCSSQTIIESLLSLHESLRLYSQNHEILLNRMFKKLDETNADSNISHIFMPVVSKDFSGIKILVNNNNKNFQGVINVIEPETGKLIGCFEAKQITAIRTALASCIGLYKQLSCSHDKLFRFENGTCYLTCFGTGLQAFWHIYIAIKLIMSGIVGESLKLVEINILYHNNMMSLDRLKSLKNLFGSNIKIELNQYQINDISSEGNGAVSNSDIIFGCLPTLEPNLFLRQLLNSKASVEQKHTYISLIGSYKPVMHECDKELIDKFKSDNESACILVDSREHTLLESGELIDSNIAPHNLIEIGELDTLKNTVLNLNEKGCKRTITLCKIVGLAVMDVALAKEFLSLRTKNTENKE</sequence>
<name>YGP9_YEAST</name>
<proteinExistence type="evidence at protein level"/>
<keyword id="KW-0007">Acetylation</keyword>
<keyword id="KW-1185">Reference proteome</keyword>
<organism>
    <name type="scientific">Saccharomyces cerevisiae (strain ATCC 204508 / S288c)</name>
    <name type="common">Baker's yeast</name>
    <dbReference type="NCBI Taxonomy" id="559292"/>
    <lineage>
        <taxon>Eukaryota</taxon>
        <taxon>Fungi</taxon>
        <taxon>Dikarya</taxon>
        <taxon>Ascomycota</taxon>
        <taxon>Saccharomycotina</taxon>
        <taxon>Saccharomycetes</taxon>
        <taxon>Saccharomycetales</taxon>
        <taxon>Saccharomycetaceae</taxon>
        <taxon>Saccharomyces</taxon>
    </lineage>
</organism>
<dbReference type="EMBL" id="Z48618">
    <property type="status" value="NOT_ANNOTATED_CDS"/>
    <property type="molecule type" value="Genomic_DNA"/>
</dbReference>
<dbReference type="EMBL" id="Z72681">
    <property type="protein sequence ID" value="CAA96871.1"/>
    <property type="molecule type" value="Genomic_DNA"/>
</dbReference>
<dbReference type="EMBL" id="AY557833">
    <property type="protein sequence ID" value="AAS56159.1"/>
    <property type="molecule type" value="Genomic_DNA"/>
</dbReference>
<dbReference type="EMBL" id="BK006941">
    <property type="protein sequence ID" value="DAA07953.1"/>
    <property type="molecule type" value="Genomic_DNA"/>
</dbReference>
<dbReference type="PIR" id="S60427">
    <property type="entry name" value="S60427"/>
</dbReference>
<dbReference type="RefSeq" id="NP_011356.1">
    <property type="nucleotide sequence ID" value="NM_001181024.1"/>
</dbReference>
<dbReference type="SMR" id="P53110"/>
<dbReference type="BioGRID" id="33094">
    <property type="interactions" value="28"/>
</dbReference>
<dbReference type="FunCoup" id="P53110">
    <property type="interactions" value="29"/>
</dbReference>
<dbReference type="STRING" id="4932.YGL159W"/>
<dbReference type="iPTMnet" id="P53110"/>
<dbReference type="PaxDb" id="4932-YGL159W"/>
<dbReference type="PeptideAtlas" id="P53110"/>
<dbReference type="EnsemblFungi" id="YGL159W_mRNA">
    <property type="protein sequence ID" value="YGL159W"/>
    <property type="gene ID" value="YGL159W"/>
</dbReference>
<dbReference type="GeneID" id="852717"/>
<dbReference type="KEGG" id="sce:YGL159W"/>
<dbReference type="AGR" id="SGD:S000003127"/>
<dbReference type="SGD" id="S000003127">
    <property type="gene designation" value="YGL159W"/>
</dbReference>
<dbReference type="VEuPathDB" id="FungiDB:YGL159W"/>
<dbReference type="eggNOG" id="KOG3007">
    <property type="taxonomic scope" value="Eukaryota"/>
</dbReference>
<dbReference type="GeneTree" id="ENSGT00390000000237"/>
<dbReference type="HOGENOM" id="CLU_042088_0_1_1"/>
<dbReference type="InParanoid" id="P53110"/>
<dbReference type="OMA" id="CVGMGLM"/>
<dbReference type="OrthoDB" id="41492at2759"/>
<dbReference type="BioCyc" id="YEAST:G3O-30648-MONOMER"/>
<dbReference type="Reactome" id="R-SCE-71064">
    <property type="pathway name" value="Lysine catabolism"/>
</dbReference>
<dbReference type="BioGRID-ORCS" id="852717">
    <property type="hits" value="1 hit in 10 CRISPR screens"/>
</dbReference>
<dbReference type="PRO" id="PR:P53110"/>
<dbReference type="Proteomes" id="UP000002311">
    <property type="component" value="Chromosome VII"/>
</dbReference>
<dbReference type="RNAct" id="P53110">
    <property type="molecule type" value="protein"/>
</dbReference>
<dbReference type="GO" id="GO:0005737">
    <property type="term" value="C:cytoplasm"/>
    <property type="evidence" value="ECO:0000318"/>
    <property type="project" value="GO_Central"/>
</dbReference>
<dbReference type="Gene3D" id="3.40.50.720">
    <property type="entry name" value="NAD(P)-binding Rossmann-like Domain"/>
    <property type="match status" value="1"/>
</dbReference>
<dbReference type="Gene3D" id="3.30.1780.10">
    <property type="entry name" value="ornithine cyclodeaminase, domain 1"/>
    <property type="match status" value="1"/>
</dbReference>
<dbReference type="InterPro" id="IPR036291">
    <property type="entry name" value="NAD(P)-bd_dom_sf"/>
</dbReference>
<dbReference type="InterPro" id="IPR003462">
    <property type="entry name" value="ODC_Mu_crystall"/>
</dbReference>
<dbReference type="InterPro" id="IPR023401">
    <property type="entry name" value="ODC_N"/>
</dbReference>
<dbReference type="PANTHER" id="PTHR13812">
    <property type="entry name" value="KETIMINE REDUCTASE MU-CRYSTALLIN"/>
    <property type="match status" value="1"/>
</dbReference>
<dbReference type="PANTHER" id="PTHR13812:SF19">
    <property type="entry name" value="KETIMINE REDUCTASE MU-CRYSTALLIN"/>
    <property type="match status" value="1"/>
</dbReference>
<dbReference type="SUPFAM" id="SSF51735">
    <property type="entry name" value="NAD(P)-binding Rossmann-fold domains"/>
    <property type="match status" value="1"/>
</dbReference>
<feature type="chain" id="PRO_0000202732" description="Uncharacterized protein YGL159W">
    <location>
        <begin position="1"/>
        <end position="370"/>
    </location>
</feature>
<feature type="modified residue" description="N-acetylmethionine" evidence="3">
    <location>
        <position position="1"/>
    </location>
</feature>
<protein>
    <recommendedName>
        <fullName>Uncharacterized protein YGL159W</fullName>
    </recommendedName>
</protein>
<accession>P53110</accession>
<accession>D6VTZ2</accession>
<gene>
    <name type="ordered locus">YGL159W</name>
    <name type="ORF">G1840</name>
</gene>
<reference key="1">
    <citation type="journal article" date="1995" name="Yeast">
        <title>DNA sequence analysis of a 35 kb segment from Saccharomyces cerevisiae chromosome VII reveals 19 open reading frames including RAD54, ACE1/CUP2, PMR1, RCK1, AMS1 and CAL1/CDC43.</title>
        <authorList>
            <person name="James C.M."/>
            <person name="Indge K.J."/>
            <person name="Oliver S.G."/>
        </authorList>
    </citation>
    <scope>NUCLEOTIDE SEQUENCE [GENOMIC DNA]</scope>
</reference>
<reference key="2">
    <citation type="journal article" date="1997" name="Nature">
        <title>The nucleotide sequence of Saccharomyces cerevisiae chromosome VII.</title>
        <authorList>
            <person name="Tettelin H."/>
            <person name="Agostoni-Carbone M.L."/>
            <person name="Albermann K."/>
            <person name="Albers M."/>
            <person name="Arroyo J."/>
            <person name="Backes U."/>
            <person name="Barreiros T."/>
            <person name="Bertani I."/>
            <person name="Bjourson A.J."/>
            <person name="Brueckner M."/>
            <person name="Bruschi C.V."/>
            <person name="Carignani G."/>
            <person name="Castagnoli L."/>
            <person name="Cerdan E."/>
            <person name="Clemente M.L."/>
            <person name="Coblenz A."/>
            <person name="Coglievina M."/>
            <person name="Coissac E."/>
            <person name="Defoor E."/>
            <person name="Del Bino S."/>
            <person name="Delius H."/>
            <person name="Delneri D."/>
            <person name="de Wergifosse P."/>
            <person name="Dujon B."/>
            <person name="Durand P."/>
            <person name="Entian K.-D."/>
            <person name="Eraso P."/>
            <person name="Escribano V."/>
            <person name="Fabiani L."/>
            <person name="Fartmann B."/>
            <person name="Feroli F."/>
            <person name="Feuermann M."/>
            <person name="Frontali L."/>
            <person name="Garcia-Gonzalez M."/>
            <person name="Garcia-Saez M.I."/>
            <person name="Goffeau A."/>
            <person name="Guerreiro P."/>
            <person name="Hani J."/>
            <person name="Hansen M."/>
            <person name="Hebling U."/>
            <person name="Hernandez K."/>
            <person name="Heumann K."/>
            <person name="Hilger F."/>
            <person name="Hofmann B."/>
            <person name="Indge K.J."/>
            <person name="James C.M."/>
            <person name="Klima R."/>
            <person name="Koetter P."/>
            <person name="Kramer B."/>
            <person name="Kramer W."/>
            <person name="Lauquin G."/>
            <person name="Leuther H."/>
            <person name="Louis E.J."/>
            <person name="Maillier E."/>
            <person name="Marconi A."/>
            <person name="Martegani E."/>
            <person name="Mazon M.J."/>
            <person name="Mazzoni C."/>
            <person name="McReynolds A.D.K."/>
            <person name="Melchioretto P."/>
            <person name="Mewes H.-W."/>
            <person name="Minenkova O."/>
            <person name="Mueller-Auer S."/>
            <person name="Nawrocki A."/>
            <person name="Netter P."/>
            <person name="Neu R."/>
            <person name="Nombela C."/>
            <person name="Oliver S.G."/>
            <person name="Panzeri L."/>
            <person name="Paoluzi S."/>
            <person name="Plevani P."/>
            <person name="Portetelle D."/>
            <person name="Portillo F."/>
            <person name="Potier S."/>
            <person name="Purnelle B."/>
            <person name="Rieger M."/>
            <person name="Riles L."/>
            <person name="Rinaldi T."/>
            <person name="Robben J."/>
            <person name="Rodrigues-Pousada C."/>
            <person name="Rodriguez-Belmonte E."/>
            <person name="Rodriguez-Torres A.M."/>
            <person name="Rose M."/>
            <person name="Ruzzi M."/>
            <person name="Saliola M."/>
            <person name="Sanchez-Perez M."/>
            <person name="Schaefer B."/>
            <person name="Schaefer M."/>
            <person name="Scharfe M."/>
            <person name="Schmidheini T."/>
            <person name="Schreer A."/>
            <person name="Skala J."/>
            <person name="Souciet J.-L."/>
            <person name="Steensma H.Y."/>
            <person name="Talla E."/>
            <person name="Thierry A."/>
            <person name="Vandenbol M."/>
            <person name="van der Aart Q.J.M."/>
            <person name="Van Dyck L."/>
            <person name="Vanoni M."/>
            <person name="Verhasselt P."/>
            <person name="Voet M."/>
            <person name="Volckaert G."/>
            <person name="Wambutt R."/>
            <person name="Watson M.D."/>
            <person name="Weber N."/>
            <person name="Wedler E."/>
            <person name="Wedler H."/>
            <person name="Wipfli P."/>
            <person name="Wolf K."/>
            <person name="Wright L.F."/>
            <person name="Zaccaria P."/>
            <person name="Zimmermann M."/>
            <person name="Zollner A."/>
            <person name="Kleine K."/>
        </authorList>
    </citation>
    <scope>NUCLEOTIDE SEQUENCE [LARGE SCALE GENOMIC DNA]</scope>
    <source>
        <strain>ATCC 204508 / S288c</strain>
    </source>
</reference>
<reference key="3">
    <citation type="journal article" date="2014" name="G3 (Bethesda)">
        <title>The reference genome sequence of Saccharomyces cerevisiae: Then and now.</title>
        <authorList>
            <person name="Engel S.R."/>
            <person name="Dietrich F.S."/>
            <person name="Fisk D.G."/>
            <person name="Binkley G."/>
            <person name="Balakrishnan R."/>
            <person name="Costanzo M.C."/>
            <person name="Dwight S.S."/>
            <person name="Hitz B.C."/>
            <person name="Karra K."/>
            <person name="Nash R.S."/>
            <person name="Weng S."/>
            <person name="Wong E.D."/>
            <person name="Lloyd P."/>
            <person name="Skrzypek M.S."/>
            <person name="Miyasato S.R."/>
            <person name="Simison M."/>
            <person name="Cherry J.M."/>
        </authorList>
    </citation>
    <scope>GENOME REANNOTATION</scope>
    <source>
        <strain>ATCC 204508 / S288c</strain>
    </source>
</reference>
<reference key="4">
    <citation type="journal article" date="2007" name="Genome Res.">
        <title>Approaching a complete repository of sequence-verified protein-encoding clones for Saccharomyces cerevisiae.</title>
        <authorList>
            <person name="Hu Y."/>
            <person name="Rolfs A."/>
            <person name="Bhullar B."/>
            <person name="Murthy T.V.S."/>
            <person name="Zhu C."/>
            <person name="Berger M.F."/>
            <person name="Camargo A.A."/>
            <person name="Kelley F."/>
            <person name="McCarron S."/>
            <person name="Jepson D."/>
            <person name="Richardson A."/>
            <person name="Raphael J."/>
            <person name="Moreira D."/>
            <person name="Taycher E."/>
            <person name="Zuo D."/>
            <person name="Mohr S."/>
            <person name="Kane M.F."/>
            <person name="Williamson J."/>
            <person name="Simpson A.J.G."/>
            <person name="Bulyk M.L."/>
            <person name="Harlow E."/>
            <person name="Marsischky G."/>
            <person name="Kolodner R.D."/>
            <person name="LaBaer J."/>
        </authorList>
    </citation>
    <scope>NUCLEOTIDE SEQUENCE [GENOMIC DNA]</scope>
    <source>
        <strain>ATCC 204508 / S288c</strain>
    </source>
</reference>
<reference key="5">
    <citation type="journal article" date="2003" name="Nature">
        <title>Global analysis of protein expression in yeast.</title>
        <authorList>
            <person name="Ghaemmaghami S."/>
            <person name="Huh W.-K."/>
            <person name="Bower K."/>
            <person name="Howson R.W."/>
            <person name="Belle A."/>
            <person name="Dephoure N."/>
            <person name="O'Shea E.K."/>
            <person name="Weissman J.S."/>
        </authorList>
    </citation>
    <scope>LEVEL OF PROTEIN EXPRESSION [LARGE SCALE ANALYSIS]</scope>
</reference>
<reference key="6">
    <citation type="journal article" date="2012" name="Proc. Natl. Acad. Sci. U.S.A.">
        <title>N-terminal acetylome analyses and functional insights of the N-terminal acetyltransferase NatB.</title>
        <authorList>
            <person name="Van Damme P."/>
            <person name="Lasa M."/>
            <person name="Polevoda B."/>
            <person name="Gazquez C."/>
            <person name="Elosegui-Artola A."/>
            <person name="Kim D.S."/>
            <person name="De Juan-Pardo E."/>
            <person name="Demeyer K."/>
            <person name="Hole K."/>
            <person name="Larrea E."/>
            <person name="Timmerman E."/>
            <person name="Prieto J."/>
            <person name="Arnesen T."/>
            <person name="Sherman F."/>
            <person name="Gevaert K."/>
            <person name="Aldabe R."/>
        </authorList>
    </citation>
    <scope>ACETYLATION [LARGE SCALE ANALYSIS] AT MET-1</scope>
    <scope>IDENTIFICATION BY MASS SPECTROMETRY [LARGE SCALE ANALYSIS]</scope>
</reference>
<comment type="miscellaneous">
    <text evidence="1">Present with 172 molecules/cell in log phase SD medium.</text>
</comment>
<comment type="similarity">
    <text evidence="2">Belongs to the ornithine cyclodeaminase/mu-crystallin family.</text>
</comment>
<evidence type="ECO:0000269" key="1">
    <source>
    </source>
</evidence>
<evidence type="ECO:0000305" key="2"/>
<evidence type="ECO:0007744" key="3">
    <source>
    </source>
</evidence>